<sequence>MTQQLQSLIDQAWEDRANLSPKSAPADVREAVANVIGQLDRGALRVAEKQDGEWIVNQWIKKAVLLSFRLEDNAPMAAGGFTQFYDKVPSKFANYTAEDFAAGGFRVVPPAVARRGSFIAKNAVLMPSYVNIGAYVDEGTMVDTWATVGSCAQIGKNVHLSGGVGIGGVLEPLQANPVIIEDNCFIGARSEVVEGVIVEENSVISMGVYLGQSTKIYDRETGEVSYGRIPAGSVVVAGNLPSKDGSHSLYCAVIVKKVDAKTRAKVGLNELLRGD</sequence>
<gene>
    <name evidence="1" type="primary">dapD</name>
    <name type="ordered locus">Rpic_1266</name>
</gene>
<protein>
    <recommendedName>
        <fullName evidence="1">2,3,4,5-tetrahydropyridine-2,6-dicarboxylate N-succinyltransferase</fullName>
        <ecNumber evidence="1">2.3.1.117</ecNumber>
    </recommendedName>
    <alternativeName>
        <fullName evidence="1">Tetrahydrodipicolinate N-succinyltransferase</fullName>
        <shortName evidence="1">THP succinyltransferase</shortName>
        <shortName evidence="1">Tetrahydropicolinate succinylase</shortName>
    </alternativeName>
</protein>
<accession>B2UAZ4</accession>
<reference key="1">
    <citation type="submission" date="2008-05" db="EMBL/GenBank/DDBJ databases">
        <title>Complete sequence of chromosome 1 of Ralstonia pickettii 12J.</title>
        <authorList>
            <person name="Lucas S."/>
            <person name="Copeland A."/>
            <person name="Lapidus A."/>
            <person name="Glavina del Rio T."/>
            <person name="Dalin E."/>
            <person name="Tice H."/>
            <person name="Bruce D."/>
            <person name="Goodwin L."/>
            <person name="Pitluck S."/>
            <person name="Meincke L."/>
            <person name="Brettin T."/>
            <person name="Detter J.C."/>
            <person name="Han C."/>
            <person name="Kuske C.R."/>
            <person name="Schmutz J."/>
            <person name="Larimer F."/>
            <person name="Land M."/>
            <person name="Hauser L."/>
            <person name="Kyrpides N."/>
            <person name="Mikhailova N."/>
            <person name="Marsh T."/>
            <person name="Richardson P."/>
        </authorList>
    </citation>
    <scope>NUCLEOTIDE SEQUENCE [LARGE SCALE GENOMIC DNA]</scope>
    <source>
        <strain>12J</strain>
    </source>
</reference>
<name>DAPD_RALPJ</name>
<proteinExistence type="inferred from homology"/>
<organism>
    <name type="scientific">Ralstonia pickettii (strain 12J)</name>
    <dbReference type="NCBI Taxonomy" id="402626"/>
    <lineage>
        <taxon>Bacteria</taxon>
        <taxon>Pseudomonadati</taxon>
        <taxon>Pseudomonadota</taxon>
        <taxon>Betaproteobacteria</taxon>
        <taxon>Burkholderiales</taxon>
        <taxon>Burkholderiaceae</taxon>
        <taxon>Ralstonia</taxon>
    </lineage>
</organism>
<evidence type="ECO:0000255" key="1">
    <source>
        <dbReference type="HAMAP-Rule" id="MF_00811"/>
    </source>
</evidence>
<dbReference type="EC" id="2.3.1.117" evidence="1"/>
<dbReference type="EMBL" id="CP001068">
    <property type="protein sequence ID" value="ACD26410.1"/>
    <property type="molecule type" value="Genomic_DNA"/>
</dbReference>
<dbReference type="SMR" id="B2UAZ4"/>
<dbReference type="STRING" id="402626.Rpic_1266"/>
<dbReference type="KEGG" id="rpi:Rpic_1266"/>
<dbReference type="eggNOG" id="COG2171">
    <property type="taxonomic scope" value="Bacteria"/>
</dbReference>
<dbReference type="HOGENOM" id="CLU_050859_0_1_4"/>
<dbReference type="UniPathway" id="UPA00034">
    <property type="reaction ID" value="UER00019"/>
</dbReference>
<dbReference type="GO" id="GO:0005737">
    <property type="term" value="C:cytoplasm"/>
    <property type="evidence" value="ECO:0007669"/>
    <property type="project" value="UniProtKB-SubCell"/>
</dbReference>
<dbReference type="GO" id="GO:0008666">
    <property type="term" value="F:2,3,4,5-tetrahydropyridine-2,6-dicarboxylate N-succinyltransferase activity"/>
    <property type="evidence" value="ECO:0007669"/>
    <property type="project" value="UniProtKB-UniRule"/>
</dbReference>
<dbReference type="GO" id="GO:0016779">
    <property type="term" value="F:nucleotidyltransferase activity"/>
    <property type="evidence" value="ECO:0007669"/>
    <property type="project" value="TreeGrafter"/>
</dbReference>
<dbReference type="GO" id="GO:0019877">
    <property type="term" value="P:diaminopimelate biosynthetic process"/>
    <property type="evidence" value="ECO:0007669"/>
    <property type="project" value="UniProtKB-UniRule"/>
</dbReference>
<dbReference type="GO" id="GO:0009089">
    <property type="term" value="P:lysine biosynthetic process via diaminopimelate"/>
    <property type="evidence" value="ECO:0007669"/>
    <property type="project" value="UniProtKB-UniRule"/>
</dbReference>
<dbReference type="CDD" id="cd03350">
    <property type="entry name" value="LbH_THP_succinylT"/>
    <property type="match status" value="1"/>
</dbReference>
<dbReference type="Gene3D" id="2.160.10.10">
    <property type="entry name" value="Hexapeptide repeat proteins"/>
    <property type="match status" value="1"/>
</dbReference>
<dbReference type="Gene3D" id="1.10.166.10">
    <property type="entry name" value="Tetrahydrodipicolinate-N-succinyltransferase, N-terminal domain"/>
    <property type="match status" value="1"/>
</dbReference>
<dbReference type="HAMAP" id="MF_00811">
    <property type="entry name" value="DapD"/>
    <property type="match status" value="1"/>
</dbReference>
<dbReference type="InterPro" id="IPR005664">
    <property type="entry name" value="DapD_Trfase_Hexpep_rpt_fam"/>
</dbReference>
<dbReference type="InterPro" id="IPR001451">
    <property type="entry name" value="Hexapep"/>
</dbReference>
<dbReference type="InterPro" id="IPR018357">
    <property type="entry name" value="Hexapep_transf_CS"/>
</dbReference>
<dbReference type="InterPro" id="IPR023180">
    <property type="entry name" value="THP_succinylTrfase_dom1"/>
</dbReference>
<dbReference type="InterPro" id="IPR037133">
    <property type="entry name" value="THP_succinylTrfase_N_sf"/>
</dbReference>
<dbReference type="InterPro" id="IPR011004">
    <property type="entry name" value="Trimer_LpxA-like_sf"/>
</dbReference>
<dbReference type="NCBIfam" id="TIGR00965">
    <property type="entry name" value="dapD"/>
    <property type="match status" value="1"/>
</dbReference>
<dbReference type="NCBIfam" id="NF008808">
    <property type="entry name" value="PRK11830.1"/>
    <property type="match status" value="1"/>
</dbReference>
<dbReference type="PANTHER" id="PTHR19136:SF52">
    <property type="entry name" value="2,3,4,5-TETRAHYDROPYRIDINE-2,6-DICARBOXYLATE N-SUCCINYLTRANSFERASE"/>
    <property type="match status" value="1"/>
</dbReference>
<dbReference type="PANTHER" id="PTHR19136">
    <property type="entry name" value="MOLYBDENUM COFACTOR GUANYLYLTRANSFERASE"/>
    <property type="match status" value="1"/>
</dbReference>
<dbReference type="Pfam" id="PF14602">
    <property type="entry name" value="Hexapep_2"/>
    <property type="match status" value="1"/>
</dbReference>
<dbReference type="Pfam" id="PF14805">
    <property type="entry name" value="THDPS_N_2"/>
    <property type="match status" value="1"/>
</dbReference>
<dbReference type="SUPFAM" id="SSF51161">
    <property type="entry name" value="Trimeric LpxA-like enzymes"/>
    <property type="match status" value="1"/>
</dbReference>
<dbReference type="PROSITE" id="PS00101">
    <property type="entry name" value="HEXAPEP_TRANSFERASES"/>
    <property type="match status" value="1"/>
</dbReference>
<keyword id="KW-0012">Acyltransferase</keyword>
<keyword id="KW-0028">Amino-acid biosynthesis</keyword>
<keyword id="KW-0963">Cytoplasm</keyword>
<keyword id="KW-0220">Diaminopimelate biosynthesis</keyword>
<keyword id="KW-0457">Lysine biosynthesis</keyword>
<keyword id="KW-0677">Repeat</keyword>
<keyword id="KW-0808">Transferase</keyword>
<feature type="chain" id="PRO_1000134059" description="2,3,4,5-tetrahydropyridine-2,6-dicarboxylate N-succinyltransferase">
    <location>
        <begin position="1"/>
        <end position="275"/>
    </location>
</feature>
<comment type="catalytic activity">
    <reaction evidence="1">
        <text>(S)-2,3,4,5-tetrahydrodipicolinate + succinyl-CoA + H2O = (S)-2-succinylamino-6-oxoheptanedioate + CoA</text>
        <dbReference type="Rhea" id="RHEA:17325"/>
        <dbReference type="ChEBI" id="CHEBI:15377"/>
        <dbReference type="ChEBI" id="CHEBI:15685"/>
        <dbReference type="ChEBI" id="CHEBI:16845"/>
        <dbReference type="ChEBI" id="CHEBI:57287"/>
        <dbReference type="ChEBI" id="CHEBI:57292"/>
        <dbReference type="EC" id="2.3.1.117"/>
    </reaction>
</comment>
<comment type="pathway">
    <text evidence="1">Amino-acid biosynthesis; L-lysine biosynthesis via DAP pathway; LL-2,6-diaminopimelate from (S)-tetrahydrodipicolinate (succinylase route): step 1/3.</text>
</comment>
<comment type="subcellular location">
    <subcellularLocation>
        <location evidence="1">Cytoplasm</location>
    </subcellularLocation>
</comment>
<comment type="similarity">
    <text evidence="1">Belongs to the transferase hexapeptide repeat family.</text>
</comment>